<gene>
    <name type="primary">RPL15</name>
</gene>
<comment type="similarity">
    <text evidence="3">Belongs to the eukaryotic ribosomal protein eL15 family.</text>
</comment>
<protein>
    <recommendedName>
        <fullName evidence="3">Large ribosomal subunit protein eL15</fullName>
    </recommendedName>
    <alternativeName>
        <fullName>60S ribosomal protein L15</fullName>
    </alternativeName>
</protein>
<evidence type="ECO:0000250" key="1"/>
<evidence type="ECO:0000256" key="2">
    <source>
        <dbReference type="SAM" id="MobiDB-lite"/>
    </source>
</evidence>
<evidence type="ECO:0000305" key="3"/>
<sequence length="204" mass="24250">MGAYKYMQEIYRKKQSDVMRFLLRIRAWQYRHLNKLHRAPRPTRPEKARRLGYKAKQGFVIYRIRIRRGGRKRPVPKGATYGKPKSHGVNQLKPTRNLQSLAEERTGRRLGGLRVLNSYWVAQDSTYKYFEVILVDIRHNVIRKSGSLNWICKHTQKHREMRGKTSAGRKHRGLGRGFHYSQTKGGSRRSCWLRHNTLSLRRKR</sequence>
<feature type="initiator methionine" description="Removed" evidence="1">
    <location>
        <position position="1"/>
    </location>
</feature>
<feature type="chain" id="PRO_0000127550" description="Large ribosomal subunit protein eL15">
    <location>
        <begin position="2"/>
        <end position="204"/>
    </location>
</feature>
<feature type="region of interest" description="Disordered" evidence="2">
    <location>
        <begin position="71"/>
        <end position="91"/>
    </location>
</feature>
<feature type="region of interest" description="Disordered" evidence="2">
    <location>
        <begin position="159"/>
        <end position="182"/>
    </location>
</feature>
<feature type="compositionally biased region" description="Basic residues" evidence="2">
    <location>
        <begin position="159"/>
        <end position="174"/>
    </location>
</feature>
<dbReference type="EMBL" id="AF087038">
    <property type="protein sequence ID" value="AAD21924.1"/>
    <property type="molecule type" value="mRNA"/>
</dbReference>
<dbReference type="SMR" id="Q9XYC2"/>
<dbReference type="GO" id="GO:0022625">
    <property type="term" value="C:cytosolic large ribosomal subunit"/>
    <property type="evidence" value="ECO:0007669"/>
    <property type="project" value="TreeGrafter"/>
</dbReference>
<dbReference type="GO" id="GO:0003723">
    <property type="term" value="F:RNA binding"/>
    <property type="evidence" value="ECO:0007669"/>
    <property type="project" value="TreeGrafter"/>
</dbReference>
<dbReference type="GO" id="GO:0003735">
    <property type="term" value="F:structural constituent of ribosome"/>
    <property type="evidence" value="ECO:0007669"/>
    <property type="project" value="InterPro"/>
</dbReference>
<dbReference type="GO" id="GO:0002181">
    <property type="term" value="P:cytoplasmic translation"/>
    <property type="evidence" value="ECO:0007669"/>
    <property type="project" value="TreeGrafter"/>
</dbReference>
<dbReference type="FunFam" id="3.40.1120.10:FF:000001">
    <property type="entry name" value="Ribosomal protein L15"/>
    <property type="match status" value="1"/>
</dbReference>
<dbReference type="Gene3D" id="3.40.1120.10">
    <property type="entry name" value="Ribosomal protein l15e"/>
    <property type="match status" value="1"/>
</dbReference>
<dbReference type="InterPro" id="IPR024794">
    <property type="entry name" value="Rbsml_eL15_core_dom_sf"/>
</dbReference>
<dbReference type="InterPro" id="IPR000439">
    <property type="entry name" value="Ribosomal_eL15"/>
</dbReference>
<dbReference type="InterPro" id="IPR020925">
    <property type="entry name" value="Ribosomal_eL15_CS"/>
</dbReference>
<dbReference type="InterPro" id="IPR012678">
    <property type="entry name" value="Ribosomal_uL23/eL15/eS24_sf"/>
</dbReference>
<dbReference type="NCBIfam" id="NF003269">
    <property type="entry name" value="PRK04243.1"/>
    <property type="match status" value="1"/>
</dbReference>
<dbReference type="PANTHER" id="PTHR11847:SF4">
    <property type="entry name" value="LARGE RIBOSOMAL SUBUNIT PROTEIN EL15"/>
    <property type="match status" value="1"/>
</dbReference>
<dbReference type="PANTHER" id="PTHR11847">
    <property type="entry name" value="RIBOSOMAL PROTEIN L15"/>
    <property type="match status" value="1"/>
</dbReference>
<dbReference type="Pfam" id="PF00827">
    <property type="entry name" value="Ribosomal_L15e"/>
    <property type="match status" value="1"/>
</dbReference>
<dbReference type="SMART" id="SM01384">
    <property type="entry name" value="Ribosomal_L15e"/>
    <property type="match status" value="1"/>
</dbReference>
<dbReference type="SUPFAM" id="SSF54189">
    <property type="entry name" value="Ribosomal proteins S24e, L23 and L15e"/>
    <property type="match status" value="1"/>
</dbReference>
<dbReference type="PROSITE" id="PS01194">
    <property type="entry name" value="RIBOSOMAL_L15E"/>
    <property type="match status" value="1"/>
</dbReference>
<accession>Q9XYC2</accession>
<name>RL15_FAXLI</name>
<organism>
    <name type="scientific">Faxonius limosus</name>
    <name type="common">Spinycheek crayfish</name>
    <name type="synonym">Orconectes limosus</name>
    <dbReference type="NCBI Taxonomy" id="28379"/>
    <lineage>
        <taxon>Eukaryota</taxon>
        <taxon>Metazoa</taxon>
        <taxon>Ecdysozoa</taxon>
        <taxon>Arthropoda</taxon>
        <taxon>Crustacea</taxon>
        <taxon>Multicrustacea</taxon>
        <taxon>Malacostraca</taxon>
        <taxon>Eumalacostraca</taxon>
        <taxon>Eucarida</taxon>
        <taxon>Decapoda</taxon>
        <taxon>Pleocyemata</taxon>
        <taxon>Astacidea</taxon>
        <taxon>Astacoidea</taxon>
        <taxon>Cambaridae</taxon>
        <taxon>Faxonius</taxon>
    </lineage>
</organism>
<proteinExistence type="evidence at transcript level"/>
<reference key="1">
    <citation type="journal article" date="1999" name="Biochem. Biophys. Res. Commun.">
        <title>Cloning and characterization of the L15 ribosomal protein gene homologue from the crayfish Orconectes limosus.</title>
        <authorList>
            <person name="Tom M."/>
            <person name="Waterman M.R."/>
            <person name="Boecking D."/>
            <person name="Dauphin-Villemant C."/>
        </authorList>
    </citation>
    <scope>NUCLEOTIDE SEQUENCE [MRNA]</scope>
    <source>
        <tissue>Epidermis</tissue>
    </source>
</reference>
<keyword id="KW-0687">Ribonucleoprotein</keyword>
<keyword id="KW-0689">Ribosomal protein</keyword>